<dbReference type="EMBL" id="CP000036">
    <property type="protein sequence ID" value="ABB68659.1"/>
    <property type="molecule type" value="Genomic_DNA"/>
</dbReference>
<dbReference type="RefSeq" id="WP_000331466.1">
    <property type="nucleotide sequence ID" value="NC_007613.1"/>
</dbReference>
<dbReference type="SMR" id="Q31TE9"/>
<dbReference type="KEGG" id="sbo:SBO_4234"/>
<dbReference type="HOGENOM" id="CLU_076075_2_0_6"/>
<dbReference type="Proteomes" id="UP000007067">
    <property type="component" value="Chromosome"/>
</dbReference>
<dbReference type="GO" id="GO:0005737">
    <property type="term" value="C:cytoplasm"/>
    <property type="evidence" value="ECO:0007669"/>
    <property type="project" value="UniProtKB-SubCell"/>
</dbReference>
<dbReference type="GO" id="GO:0046872">
    <property type="term" value="F:metal ion binding"/>
    <property type="evidence" value="ECO:0007669"/>
    <property type="project" value="UniProtKB-KW"/>
</dbReference>
<dbReference type="GO" id="GO:0030091">
    <property type="term" value="P:protein repair"/>
    <property type="evidence" value="ECO:0007669"/>
    <property type="project" value="UniProtKB-UniRule"/>
</dbReference>
<dbReference type="GO" id="GO:0051409">
    <property type="term" value="P:response to nitrosative stress"/>
    <property type="evidence" value="ECO:0007669"/>
    <property type="project" value="UniProtKB-UniRule"/>
</dbReference>
<dbReference type="GO" id="GO:0006979">
    <property type="term" value="P:response to oxidative stress"/>
    <property type="evidence" value="ECO:0007669"/>
    <property type="project" value="UniProtKB-UniRule"/>
</dbReference>
<dbReference type="CDD" id="cd12108">
    <property type="entry name" value="Hr-like"/>
    <property type="match status" value="1"/>
</dbReference>
<dbReference type="FunFam" id="1.20.120.520:FF:000001">
    <property type="entry name" value="Iron-sulfur cluster repair protein YtfE"/>
    <property type="match status" value="1"/>
</dbReference>
<dbReference type="Gene3D" id="1.20.120.520">
    <property type="entry name" value="nmb1532 protein domain like"/>
    <property type="match status" value="1"/>
</dbReference>
<dbReference type="HAMAP" id="MF_01606">
    <property type="entry name" value="RIC_YtfE"/>
    <property type="match status" value="1"/>
</dbReference>
<dbReference type="InterPro" id="IPR023742">
    <property type="entry name" value="FeS-repair_YftE"/>
</dbReference>
<dbReference type="InterPro" id="IPR012312">
    <property type="entry name" value="Hemerythrin-like"/>
</dbReference>
<dbReference type="InterPro" id="IPR019903">
    <property type="entry name" value="RIC_family"/>
</dbReference>
<dbReference type="NCBIfam" id="TIGR03652">
    <property type="entry name" value="FeS_repair_RIC"/>
    <property type="match status" value="1"/>
</dbReference>
<dbReference type="NCBIfam" id="NF008221">
    <property type="entry name" value="PRK10992.1"/>
    <property type="match status" value="1"/>
</dbReference>
<dbReference type="PANTHER" id="PTHR36438">
    <property type="entry name" value="IRON-SULFUR CLUSTER REPAIR PROTEIN YTFE"/>
    <property type="match status" value="1"/>
</dbReference>
<dbReference type="PANTHER" id="PTHR36438:SF1">
    <property type="entry name" value="IRON-SULFUR CLUSTER REPAIR PROTEIN YTFE"/>
    <property type="match status" value="1"/>
</dbReference>
<dbReference type="Pfam" id="PF01814">
    <property type="entry name" value="Hemerythrin"/>
    <property type="match status" value="1"/>
</dbReference>
<dbReference type="Pfam" id="PF04405">
    <property type="entry name" value="ScdA_N"/>
    <property type="match status" value="1"/>
</dbReference>
<proteinExistence type="inferred from homology"/>
<accession>Q31TE9</accession>
<keyword id="KW-0963">Cytoplasm</keyword>
<keyword id="KW-0408">Iron</keyword>
<keyword id="KW-0479">Metal-binding</keyword>
<keyword id="KW-0346">Stress response</keyword>
<name>YTFE_SHIBS</name>
<gene>
    <name evidence="1" type="primary">ytfE</name>
    <name type="ordered locus">SBO_4234</name>
</gene>
<reference key="1">
    <citation type="journal article" date="2005" name="Nucleic Acids Res.">
        <title>Genome dynamics and diversity of Shigella species, the etiologic agents of bacillary dysentery.</title>
        <authorList>
            <person name="Yang F."/>
            <person name="Yang J."/>
            <person name="Zhang X."/>
            <person name="Chen L."/>
            <person name="Jiang Y."/>
            <person name="Yan Y."/>
            <person name="Tang X."/>
            <person name="Wang J."/>
            <person name="Xiong Z."/>
            <person name="Dong J."/>
            <person name="Xue Y."/>
            <person name="Zhu Y."/>
            <person name="Xu X."/>
            <person name="Sun L."/>
            <person name="Chen S."/>
            <person name="Nie H."/>
            <person name="Peng J."/>
            <person name="Xu J."/>
            <person name="Wang Y."/>
            <person name="Yuan Z."/>
            <person name="Wen Y."/>
            <person name="Yao Z."/>
            <person name="Shen Y."/>
            <person name="Qiang B."/>
            <person name="Hou Y."/>
            <person name="Yu J."/>
            <person name="Jin Q."/>
        </authorList>
    </citation>
    <scope>NUCLEOTIDE SEQUENCE [LARGE SCALE GENOMIC DNA]</scope>
    <source>
        <strain>Sb227</strain>
    </source>
</reference>
<evidence type="ECO:0000255" key="1">
    <source>
        <dbReference type="HAMAP-Rule" id="MF_01606"/>
    </source>
</evidence>
<sequence>MAYRDQPLGELALSIPRASALFRKYNMDYCCGGKQTLARAAARKELDVEVIEAELAKLAEQPIEKDWRSAPLAEIIDHIIVRYHDRHREQLPELILQATKVERVHADKPSVPKGLTKYLTMLHEELSSHMMKEEQILFPMIKQGMGSQAMGPISVMESEHDEAGELLEVIKHTTNNVTPPPEACTTWKAMYNGINELIDDLMDHISLENNVLFPRALAGE</sequence>
<protein>
    <recommendedName>
        <fullName evidence="1">Iron-sulfur cluster repair protein YtfE</fullName>
    </recommendedName>
</protein>
<comment type="function">
    <text evidence="1">Di-iron-containing protein involved in the repair of iron-sulfur clusters damaged by oxidative and nitrosative stress conditions.</text>
</comment>
<comment type="subunit">
    <text evidence="1">Homodimer.</text>
</comment>
<comment type="subcellular location">
    <subcellularLocation>
        <location evidence="1">Cytoplasm</location>
    </subcellularLocation>
</comment>
<comment type="similarity">
    <text evidence="1">Belongs to the RIC family. YtfE subfamily.</text>
</comment>
<feature type="chain" id="PRO_0000291700" description="Iron-sulfur cluster repair protein YtfE">
    <location>
        <begin position="1"/>
        <end position="220"/>
    </location>
</feature>
<organism>
    <name type="scientific">Shigella boydii serotype 4 (strain Sb227)</name>
    <dbReference type="NCBI Taxonomy" id="300268"/>
    <lineage>
        <taxon>Bacteria</taxon>
        <taxon>Pseudomonadati</taxon>
        <taxon>Pseudomonadota</taxon>
        <taxon>Gammaproteobacteria</taxon>
        <taxon>Enterobacterales</taxon>
        <taxon>Enterobacteriaceae</taxon>
        <taxon>Shigella</taxon>
    </lineage>
</organism>